<sequence length="300" mass="32658">MATKAAFAKMNGLGNQIIVADMRGRADRITPEAAIRLAGDSETAFDQIMAIHDPRTAGTDNYIAIINCDGTEAQACGNGTRCVVQALAAETGRQAFTFETRAGILTATEHEDGLISVDMGKPRFDWQDIPLAEEFRDTRMIELQVGPIDAPVLHSPSVASMGNPHAIFWVDRDVWSYELEKFGPLLEHHPIFPERANISIAHVTSPETIDLRTWERGAGLTRACGSAACAAAVSAVRTRRTGRTVTVNVPGGPLRIEWRDDDHVMMTGPAEWEFSGTFDPATGEWSRDAQNDKPTDRGAA</sequence>
<accession>A6WXE4</accession>
<evidence type="ECO:0000255" key="1">
    <source>
        <dbReference type="HAMAP-Rule" id="MF_00197"/>
    </source>
</evidence>
<evidence type="ECO:0000256" key="2">
    <source>
        <dbReference type="SAM" id="MobiDB-lite"/>
    </source>
</evidence>
<comment type="function">
    <text evidence="1">Catalyzes the stereoinversion of LL-2,6-diaminopimelate (L,L-DAP) to meso-diaminopimelate (meso-DAP), a precursor of L-lysine and an essential component of the bacterial peptidoglycan.</text>
</comment>
<comment type="catalytic activity">
    <reaction evidence="1">
        <text>(2S,6S)-2,6-diaminopimelate = meso-2,6-diaminopimelate</text>
        <dbReference type="Rhea" id="RHEA:15393"/>
        <dbReference type="ChEBI" id="CHEBI:57609"/>
        <dbReference type="ChEBI" id="CHEBI:57791"/>
        <dbReference type="EC" id="5.1.1.7"/>
    </reaction>
</comment>
<comment type="pathway">
    <text evidence="1">Amino-acid biosynthesis; L-lysine biosynthesis via DAP pathway; DL-2,6-diaminopimelate from LL-2,6-diaminopimelate: step 1/1.</text>
</comment>
<comment type="subunit">
    <text evidence="1">Homodimer.</text>
</comment>
<comment type="subcellular location">
    <subcellularLocation>
        <location evidence="1">Cytoplasm</location>
    </subcellularLocation>
</comment>
<comment type="similarity">
    <text evidence="1">Belongs to the diaminopimelate epimerase family.</text>
</comment>
<name>DAPF_BRUA4</name>
<feature type="chain" id="PRO_1000011921" description="Diaminopimelate epimerase">
    <location>
        <begin position="1"/>
        <end position="300"/>
    </location>
</feature>
<feature type="region of interest" description="Disordered" evidence="2">
    <location>
        <begin position="275"/>
        <end position="300"/>
    </location>
</feature>
<feature type="compositionally biased region" description="Basic and acidic residues" evidence="2">
    <location>
        <begin position="285"/>
        <end position="300"/>
    </location>
</feature>
<feature type="active site" description="Proton donor" evidence="1">
    <location>
        <position position="76"/>
    </location>
</feature>
<feature type="active site" description="Proton acceptor" evidence="1">
    <location>
        <position position="224"/>
    </location>
</feature>
<feature type="binding site" evidence="1">
    <location>
        <position position="15"/>
    </location>
    <ligand>
        <name>substrate</name>
    </ligand>
</feature>
<feature type="binding site" evidence="1">
    <location>
        <position position="47"/>
    </location>
    <ligand>
        <name>substrate</name>
    </ligand>
</feature>
<feature type="binding site" evidence="1">
    <location>
        <position position="67"/>
    </location>
    <ligand>
        <name>substrate</name>
    </ligand>
</feature>
<feature type="binding site" evidence="1">
    <location>
        <begin position="77"/>
        <end position="78"/>
    </location>
    <ligand>
        <name>substrate</name>
    </ligand>
</feature>
<feature type="binding site" evidence="1">
    <location>
        <position position="163"/>
    </location>
    <ligand>
        <name>substrate</name>
    </ligand>
</feature>
<feature type="binding site" evidence="1">
    <location>
        <position position="197"/>
    </location>
    <ligand>
        <name>substrate</name>
    </ligand>
</feature>
<feature type="binding site" evidence="1">
    <location>
        <begin position="215"/>
        <end position="216"/>
    </location>
    <ligand>
        <name>substrate</name>
    </ligand>
</feature>
<feature type="binding site" evidence="1">
    <location>
        <begin position="225"/>
        <end position="226"/>
    </location>
    <ligand>
        <name>substrate</name>
    </ligand>
</feature>
<feature type="site" description="Could be important to modulate the pK values of the two catalytic cysteine residues" evidence="1">
    <location>
        <position position="165"/>
    </location>
</feature>
<feature type="site" description="Could be important to modulate the pK values of the two catalytic cysteine residues" evidence="1">
    <location>
        <position position="215"/>
    </location>
</feature>
<protein>
    <recommendedName>
        <fullName evidence="1">Diaminopimelate epimerase</fullName>
        <shortName evidence="1">DAP epimerase</shortName>
        <ecNumber evidence="1">5.1.1.7</ecNumber>
    </recommendedName>
    <alternativeName>
        <fullName evidence="1">PLP-independent amino acid racemase</fullName>
    </alternativeName>
</protein>
<keyword id="KW-0028">Amino-acid biosynthesis</keyword>
<keyword id="KW-0963">Cytoplasm</keyword>
<keyword id="KW-0413">Isomerase</keyword>
<keyword id="KW-0457">Lysine biosynthesis</keyword>
<keyword id="KW-1185">Reference proteome</keyword>
<gene>
    <name evidence="1" type="primary">dapF</name>
    <name type="ordered locus">Oant_0927</name>
</gene>
<dbReference type="EC" id="5.1.1.7" evidence="1"/>
<dbReference type="EMBL" id="CP000758">
    <property type="protein sequence ID" value="ABS13648.1"/>
    <property type="molecule type" value="Genomic_DNA"/>
</dbReference>
<dbReference type="RefSeq" id="WP_012091128.1">
    <property type="nucleotide sequence ID" value="NC_009667.1"/>
</dbReference>
<dbReference type="SMR" id="A6WXE4"/>
<dbReference type="STRING" id="439375.Oant_0927"/>
<dbReference type="KEGG" id="oan:Oant_0927"/>
<dbReference type="PATRIC" id="fig|439375.7.peg.972"/>
<dbReference type="eggNOG" id="COG0253">
    <property type="taxonomic scope" value="Bacteria"/>
</dbReference>
<dbReference type="HOGENOM" id="CLU_053306_1_0_5"/>
<dbReference type="PhylomeDB" id="A6WXE4"/>
<dbReference type="UniPathway" id="UPA00034">
    <property type="reaction ID" value="UER00025"/>
</dbReference>
<dbReference type="Proteomes" id="UP000002301">
    <property type="component" value="Chromosome 1"/>
</dbReference>
<dbReference type="GO" id="GO:0005829">
    <property type="term" value="C:cytosol"/>
    <property type="evidence" value="ECO:0007669"/>
    <property type="project" value="TreeGrafter"/>
</dbReference>
<dbReference type="GO" id="GO:0008837">
    <property type="term" value="F:diaminopimelate epimerase activity"/>
    <property type="evidence" value="ECO:0007669"/>
    <property type="project" value="UniProtKB-UniRule"/>
</dbReference>
<dbReference type="GO" id="GO:0009089">
    <property type="term" value="P:lysine biosynthetic process via diaminopimelate"/>
    <property type="evidence" value="ECO:0007669"/>
    <property type="project" value="UniProtKB-UniRule"/>
</dbReference>
<dbReference type="FunFam" id="3.10.310.10:FF:000004">
    <property type="entry name" value="Diaminopimelate epimerase"/>
    <property type="match status" value="1"/>
</dbReference>
<dbReference type="Gene3D" id="3.10.310.10">
    <property type="entry name" value="Diaminopimelate Epimerase, Chain A, domain 1"/>
    <property type="match status" value="2"/>
</dbReference>
<dbReference type="HAMAP" id="MF_00197">
    <property type="entry name" value="DAP_epimerase"/>
    <property type="match status" value="1"/>
</dbReference>
<dbReference type="InterPro" id="IPR018510">
    <property type="entry name" value="DAP_epimerase_AS"/>
</dbReference>
<dbReference type="InterPro" id="IPR001653">
    <property type="entry name" value="DAP_epimerase_DapF"/>
</dbReference>
<dbReference type="NCBIfam" id="TIGR00652">
    <property type="entry name" value="DapF"/>
    <property type="match status" value="1"/>
</dbReference>
<dbReference type="PANTHER" id="PTHR31689:SF0">
    <property type="entry name" value="DIAMINOPIMELATE EPIMERASE"/>
    <property type="match status" value="1"/>
</dbReference>
<dbReference type="PANTHER" id="PTHR31689">
    <property type="entry name" value="DIAMINOPIMELATE EPIMERASE, CHLOROPLASTIC"/>
    <property type="match status" value="1"/>
</dbReference>
<dbReference type="Pfam" id="PF01678">
    <property type="entry name" value="DAP_epimerase"/>
    <property type="match status" value="2"/>
</dbReference>
<dbReference type="SUPFAM" id="SSF54506">
    <property type="entry name" value="Diaminopimelate epimerase-like"/>
    <property type="match status" value="2"/>
</dbReference>
<dbReference type="PROSITE" id="PS01326">
    <property type="entry name" value="DAP_EPIMERASE"/>
    <property type="match status" value="1"/>
</dbReference>
<reference key="1">
    <citation type="journal article" date="2011" name="J. Bacteriol.">
        <title>Genome of Ochrobactrum anthropi ATCC 49188 T, a versatile opportunistic pathogen and symbiont of several eukaryotic hosts.</title>
        <authorList>
            <person name="Chain P.S."/>
            <person name="Lang D.M."/>
            <person name="Comerci D.J."/>
            <person name="Malfatti S.A."/>
            <person name="Vergez L.M."/>
            <person name="Shin M."/>
            <person name="Ugalde R.A."/>
            <person name="Garcia E."/>
            <person name="Tolmasky M.E."/>
        </authorList>
    </citation>
    <scope>NUCLEOTIDE SEQUENCE [LARGE SCALE GENOMIC DNA]</scope>
    <source>
        <strain>ATCC 49188 / DSM 6882 / CCUG 24695 / JCM 21032 / LMG 3331 / NBRC 15819 / NCTC 12168 / Alc 37</strain>
    </source>
</reference>
<proteinExistence type="inferred from homology"/>
<organism>
    <name type="scientific">Brucella anthropi (strain ATCC 49188 / DSM 6882 / CCUG 24695 / JCM 21032 / LMG 3331 / NBRC 15819 / NCTC 12168 / Alc 37)</name>
    <name type="common">Ochrobactrum anthropi</name>
    <dbReference type="NCBI Taxonomy" id="439375"/>
    <lineage>
        <taxon>Bacteria</taxon>
        <taxon>Pseudomonadati</taxon>
        <taxon>Pseudomonadota</taxon>
        <taxon>Alphaproteobacteria</taxon>
        <taxon>Hyphomicrobiales</taxon>
        <taxon>Brucellaceae</taxon>
        <taxon>Brucella/Ochrobactrum group</taxon>
        <taxon>Brucella</taxon>
    </lineage>
</organism>